<proteinExistence type="predicted"/>
<comment type="subcellular location">
    <subcellularLocation>
        <location evidence="2">Cell membrane</location>
        <topology evidence="2">Multi-pass membrane protein</topology>
    </subcellularLocation>
</comment>
<feature type="chain" id="PRO_0000049496" description="Uncharacterized protein YddD">
    <location>
        <begin position="1"/>
        <end position="174"/>
    </location>
</feature>
<feature type="transmembrane region" description="Helical" evidence="1">
    <location>
        <begin position="29"/>
        <end position="51"/>
    </location>
</feature>
<feature type="transmembrane region" description="Helical" evidence="1">
    <location>
        <begin position="66"/>
        <end position="83"/>
    </location>
</feature>
<sequence>MGRLVFNYRKAMREPKKIQQLTENYSLPFAVELIPAINYFIFVGLCFGFWYGVRMIFPHAFDNSYVIVIFGIPFFLTMLVTKIKPEGKNIYIYFFDFAKYYFFIKLPQKKYCNDRKIDLSNEKQIEFRKLVKVVDYSNETKNAYEGNTQEFAVNKNGRRVGVLPNKKQFDSYAK</sequence>
<name>YDDD_BACSU</name>
<protein>
    <recommendedName>
        <fullName>Uncharacterized protein YddD</fullName>
    </recommendedName>
</protein>
<reference key="1">
    <citation type="submission" date="1997-03" db="EMBL/GenBank/DDBJ databases">
        <title>A 148 kbp sequence of the region between 35 and 47 degree of the Bacillus subtilis genome.</title>
        <authorList>
            <person name="Kasahara Y."/>
            <person name="Nakai S."/>
            <person name="Lee S."/>
            <person name="Sadaie Y."/>
            <person name="Ogasawara N."/>
        </authorList>
    </citation>
    <scope>NUCLEOTIDE SEQUENCE [GENOMIC DNA]</scope>
    <source>
        <strain>168</strain>
    </source>
</reference>
<reference key="2">
    <citation type="journal article" date="1997" name="Nature">
        <title>The complete genome sequence of the Gram-positive bacterium Bacillus subtilis.</title>
        <authorList>
            <person name="Kunst F."/>
            <person name="Ogasawara N."/>
            <person name="Moszer I."/>
            <person name="Albertini A.M."/>
            <person name="Alloni G."/>
            <person name="Azevedo V."/>
            <person name="Bertero M.G."/>
            <person name="Bessieres P."/>
            <person name="Bolotin A."/>
            <person name="Borchert S."/>
            <person name="Borriss R."/>
            <person name="Boursier L."/>
            <person name="Brans A."/>
            <person name="Braun M."/>
            <person name="Brignell S.C."/>
            <person name="Bron S."/>
            <person name="Brouillet S."/>
            <person name="Bruschi C.V."/>
            <person name="Caldwell B."/>
            <person name="Capuano V."/>
            <person name="Carter N.M."/>
            <person name="Choi S.-K."/>
            <person name="Codani J.-J."/>
            <person name="Connerton I.F."/>
            <person name="Cummings N.J."/>
            <person name="Daniel R.A."/>
            <person name="Denizot F."/>
            <person name="Devine K.M."/>
            <person name="Duesterhoeft A."/>
            <person name="Ehrlich S.D."/>
            <person name="Emmerson P.T."/>
            <person name="Entian K.-D."/>
            <person name="Errington J."/>
            <person name="Fabret C."/>
            <person name="Ferrari E."/>
            <person name="Foulger D."/>
            <person name="Fritz C."/>
            <person name="Fujita M."/>
            <person name="Fujita Y."/>
            <person name="Fuma S."/>
            <person name="Galizzi A."/>
            <person name="Galleron N."/>
            <person name="Ghim S.-Y."/>
            <person name="Glaser P."/>
            <person name="Goffeau A."/>
            <person name="Golightly E.J."/>
            <person name="Grandi G."/>
            <person name="Guiseppi G."/>
            <person name="Guy B.J."/>
            <person name="Haga K."/>
            <person name="Haiech J."/>
            <person name="Harwood C.R."/>
            <person name="Henaut A."/>
            <person name="Hilbert H."/>
            <person name="Holsappel S."/>
            <person name="Hosono S."/>
            <person name="Hullo M.-F."/>
            <person name="Itaya M."/>
            <person name="Jones L.-M."/>
            <person name="Joris B."/>
            <person name="Karamata D."/>
            <person name="Kasahara Y."/>
            <person name="Klaerr-Blanchard M."/>
            <person name="Klein C."/>
            <person name="Kobayashi Y."/>
            <person name="Koetter P."/>
            <person name="Koningstein G."/>
            <person name="Krogh S."/>
            <person name="Kumano M."/>
            <person name="Kurita K."/>
            <person name="Lapidus A."/>
            <person name="Lardinois S."/>
            <person name="Lauber J."/>
            <person name="Lazarevic V."/>
            <person name="Lee S.-M."/>
            <person name="Levine A."/>
            <person name="Liu H."/>
            <person name="Masuda S."/>
            <person name="Mauel C."/>
            <person name="Medigue C."/>
            <person name="Medina N."/>
            <person name="Mellado R.P."/>
            <person name="Mizuno M."/>
            <person name="Moestl D."/>
            <person name="Nakai S."/>
            <person name="Noback M."/>
            <person name="Noone D."/>
            <person name="O'Reilly M."/>
            <person name="Ogawa K."/>
            <person name="Ogiwara A."/>
            <person name="Oudega B."/>
            <person name="Park S.-H."/>
            <person name="Parro V."/>
            <person name="Pohl T.M."/>
            <person name="Portetelle D."/>
            <person name="Porwollik S."/>
            <person name="Prescott A.M."/>
            <person name="Presecan E."/>
            <person name="Pujic P."/>
            <person name="Purnelle B."/>
            <person name="Rapoport G."/>
            <person name="Rey M."/>
            <person name="Reynolds S."/>
            <person name="Rieger M."/>
            <person name="Rivolta C."/>
            <person name="Rocha E."/>
            <person name="Roche B."/>
            <person name="Rose M."/>
            <person name="Sadaie Y."/>
            <person name="Sato T."/>
            <person name="Scanlan E."/>
            <person name="Schleich S."/>
            <person name="Schroeter R."/>
            <person name="Scoffone F."/>
            <person name="Sekiguchi J."/>
            <person name="Sekowska A."/>
            <person name="Seror S.J."/>
            <person name="Serror P."/>
            <person name="Shin B.-S."/>
            <person name="Soldo B."/>
            <person name="Sorokin A."/>
            <person name="Tacconi E."/>
            <person name="Takagi T."/>
            <person name="Takahashi H."/>
            <person name="Takemaru K."/>
            <person name="Takeuchi M."/>
            <person name="Tamakoshi A."/>
            <person name="Tanaka T."/>
            <person name="Terpstra P."/>
            <person name="Tognoni A."/>
            <person name="Tosato V."/>
            <person name="Uchiyama S."/>
            <person name="Vandenbol M."/>
            <person name="Vannier F."/>
            <person name="Vassarotti A."/>
            <person name="Viari A."/>
            <person name="Wambutt R."/>
            <person name="Wedler E."/>
            <person name="Wedler H."/>
            <person name="Weitzenegger T."/>
            <person name="Winters P."/>
            <person name="Wipat A."/>
            <person name="Yamamoto H."/>
            <person name="Yamane K."/>
            <person name="Yasumoto K."/>
            <person name="Yata K."/>
            <person name="Yoshida K."/>
            <person name="Yoshikawa H.-F."/>
            <person name="Zumstein E."/>
            <person name="Yoshikawa H."/>
            <person name="Danchin A."/>
        </authorList>
    </citation>
    <scope>NUCLEOTIDE SEQUENCE [LARGE SCALE GENOMIC DNA]</scope>
    <source>
        <strain>168</strain>
    </source>
</reference>
<accession>P96641</accession>
<gene>
    <name type="primary">yddD</name>
    <name type="ordered locus">BSU04930</name>
</gene>
<dbReference type="EMBL" id="AB001488">
    <property type="protein sequence ID" value="BAA19330.1"/>
    <property type="molecule type" value="Genomic_DNA"/>
</dbReference>
<dbReference type="EMBL" id="AL009126">
    <property type="protein sequence ID" value="CAB12300.1"/>
    <property type="molecule type" value="Genomic_DNA"/>
</dbReference>
<dbReference type="PIR" id="E69775">
    <property type="entry name" value="E69775"/>
</dbReference>
<dbReference type="RefSeq" id="WP_009966628.1">
    <property type="nucleotide sequence ID" value="NZ_OZ025638.1"/>
</dbReference>
<dbReference type="FunCoup" id="P96641">
    <property type="interactions" value="175"/>
</dbReference>
<dbReference type="STRING" id="224308.BSU04930"/>
<dbReference type="PaxDb" id="224308-BSU04930"/>
<dbReference type="DNASU" id="939921"/>
<dbReference type="EnsemblBacteria" id="CAB12300">
    <property type="protein sequence ID" value="CAB12300"/>
    <property type="gene ID" value="BSU_04930"/>
</dbReference>
<dbReference type="GeneID" id="939921"/>
<dbReference type="KEGG" id="bsu:BSU04930"/>
<dbReference type="PATRIC" id="fig|224308.179.peg.524"/>
<dbReference type="eggNOG" id="ENOG5032IPP">
    <property type="taxonomic scope" value="Bacteria"/>
</dbReference>
<dbReference type="InParanoid" id="P96641"/>
<dbReference type="OrthoDB" id="2189559at2"/>
<dbReference type="BioCyc" id="BSUB:BSU04930-MONOMER"/>
<dbReference type="Proteomes" id="UP000001570">
    <property type="component" value="Chromosome"/>
</dbReference>
<dbReference type="GO" id="GO:0005886">
    <property type="term" value="C:plasma membrane"/>
    <property type="evidence" value="ECO:0007669"/>
    <property type="project" value="UniProtKB-SubCell"/>
</dbReference>
<dbReference type="InterPro" id="IPR025608">
    <property type="entry name" value="TcpE"/>
</dbReference>
<dbReference type="Pfam" id="PF12648">
    <property type="entry name" value="TcpE"/>
    <property type="match status" value="1"/>
</dbReference>
<keyword id="KW-1003">Cell membrane</keyword>
<keyword id="KW-0472">Membrane</keyword>
<keyword id="KW-1185">Reference proteome</keyword>
<keyword id="KW-0812">Transmembrane</keyword>
<keyword id="KW-1133">Transmembrane helix</keyword>
<evidence type="ECO:0000255" key="1"/>
<evidence type="ECO:0000305" key="2"/>
<organism>
    <name type="scientific">Bacillus subtilis (strain 168)</name>
    <dbReference type="NCBI Taxonomy" id="224308"/>
    <lineage>
        <taxon>Bacteria</taxon>
        <taxon>Bacillati</taxon>
        <taxon>Bacillota</taxon>
        <taxon>Bacilli</taxon>
        <taxon>Bacillales</taxon>
        <taxon>Bacillaceae</taxon>
        <taxon>Bacillus</taxon>
    </lineage>
</organism>